<dbReference type="EC" id="2.6.1.83" evidence="1"/>
<dbReference type="EMBL" id="CP000688">
    <property type="protein sequence ID" value="ABQ17253.1"/>
    <property type="molecule type" value="Genomic_DNA"/>
</dbReference>
<dbReference type="SMR" id="A5FRC5"/>
<dbReference type="KEGG" id="deb:DehaBAV1_0669"/>
<dbReference type="PATRIC" id="fig|216389.18.peg.718"/>
<dbReference type="HOGENOM" id="CLU_017584_4_5_0"/>
<dbReference type="UniPathway" id="UPA00034">
    <property type="reaction ID" value="UER00466"/>
</dbReference>
<dbReference type="GO" id="GO:0010285">
    <property type="term" value="F:L,L-diaminopimelate aminotransferase activity"/>
    <property type="evidence" value="ECO:0007669"/>
    <property type="project" value="UniProtKB-UniRule"/>
</dbReference>
<dbReference type="GO" id="GO:0030170">
    <property type="term" value="F:pyridoxal phosphate binding"/>
    <property type="evidence" value="ECO:0007669"/>
    <property type="project" value="UniProtKB-UniRule"/>
</dbReference>
<dbReference type="GO" id="GO:0033362">
    <property type="term" value="P:lysine biosynthetic process via diaminopimelate, diaminopimelate-aminotransferase pathway"/>
    <property type="evidence" value="ECO:0007669"/>
    <property type="project" value="UniProtKB-UniRule"/>
</dbReference>
<dbReference type="CDD" id="cd00609">
    <property type="entry name" value="AAT_like"/>
    <property type="match status" value="1"/>
</dbReference>
<dbReference type="Gene3D" id="3.90.1150.10">
    <property type="entry name" value="Aspartate Aminotransferase, domain 1"/>
    <property type="match status" value="1"/>
</dbReference>
<dbReference type="Gene3D" id="3.40.640.10">
    <property type="entry name" value="Type I PLP-dependent aspartate aminotransferase-like (Major domain)"/>
    <property type="match status" value="1"/>
</dbReference>
<dbReference type="HAMAP" id="MF_01642">
    <property type="entry name" value="DapL_aminotrans_1"/>
    <property type="match status" value="1"/>
</dbReference>
<dbReference type="InterPro" id="IPR004839">
    <property type="entry name" value="Aminotransferase_I/II_large"/>
</dbReference>
<dbReference type="InterPro" id="IPR019881">
    <property type="entry name" value="DAP-NH2Trfase_DapL_Desulfo"/>
</dbReference>
<dbReference type="InterPro" id="IPR019942">
    <property type="entry name" value="DapL/ALD1"/>
</dbReference>
<dbReference type="InterPro" id="IPR050881">
    <property type="entry name" value="LL-DAP_aminotransferase"/>
</dbReference>
<dbReference type="InterPro" id="IPR004838">
    <property type="entry name" value="NHTrfase_class1_PyrdxlP-BS"/>
</dbReference>
<dbReference type="InterPro" id="IPR015424">
    <property type="entry name" value="PyrdxlP-dep_Trfase"/>
</dbReference>
<dbReference type="InterPro" id="IPR015421">
    <property type="entry name" value="PyrdxlP-dep_Trfase_major"/>
</dbReference>
<dbReference type="InterPro" id="IPR015422">
    <property type="entry name" value="PyrdxlP-dep_Trfase_small"/>
</dbReference>
<dbReference type="NCBIfam" id="TIGR03540">
    <property type="entry name" value="DapC_direct"/>
    <property type="match status" value="1"/>
</dbReference>
<dbReference type="NCBIfam" id="NF006756">
    <property type="entry name" value="PRK09276.1"/>
    <property type="match status" value="1"/>
</dbReference>
<dbReference type="PANTHER" id="PTHR42832">
    <property type="entry name" value="AMINO ACID AMINOTRANSFERASE"/>
    <property type="match status" value="1"/>
</dbReference>
<dbReference type="PANTHER" id="PTHR42832:SF3">
    <property type="entry name" value="L-GLUTAMINE--4-(METHYLSULFANYL)-2-OXOBUTANOATE AMINOTRANSFERASE"/>
    <property type="match status" value="1"/>
</dbReference>
<dbReference type="Pfam" id="PF00155">
    <property type="entry name" value="Aminotran_1_2"/>
    <property type="match status" value="1"/>
</dbReference>
<dbReference type="SUPFAM" id="SSF53383">
    <property type="entry name" value="PLP-dependent transferases"/>
    <property type="match status" value="1"/>
</dbReference>
<dbReference type="PROSITE" id="PS00105">
    <property type="entry name" value="AA_TRANSFER_CLASS_1"/>
    <property type="match status" value="1"/>
</dbReference>
<protein>
    <recommendedName>
        <fullName evidence="1">LL-diaminopimelate aminotransferase</fullName>
        <shortName evidence="1">DAP-AT</shortName>
        <shortName evidence="1">DAP-aminotransferase</shortName>
        <shortName evidence="1">LL-DAP-aminotransferase</shortName>
        <ecNumber evidence="1">2.6.1.83</ecNumber>
    </recommendedName>
</protein>
<reference key="1">
    <citation type="submission" date="2007-05" db="EMBL/GenBank/DDBJ databases">
        <title>Complete sequence of Dehalococcoides sp. BAV1.</title>
        <authorList>
            <consortium name="US DOE Joint Genome Institute"/>
            <person name="Copeland A."/>
            <person name="Lucas S."/>
            <person name="Lapidus A."/>
            <person name="Barry K."/>
            <person name="Detter J.C."/>
            <person name="Glavina del Rio T."/>
            <person name="Hammon N."/>
            <person name="Israni S."/>
            <person name="Pitluck S."/>
            <person name="Lowry S."/>
            <person name="Clum A."/>
            <person name="Schmutz J."/>
            <person name="Larimer F."/>
            <person name="Land M."/>
            <person name="Hauser L."/>
            <person name="Kyrpides N."/>
            <person name="Kim E."/>
            <person name="Ritalahti K.M."/>
            <person name="Loeffler F."/>
            <person name="Richardson P."/>
        </authorList>
    </citation>
    <scope>NUCLEOTIDE SEQUENCE [LARGE SCALE GENOMIC DNA]</scope>
    <source>
        <strain>ATCC BAA-2100 / JCM 16839 / KCTC 5957 / BAV1</strain>
    </source>
</reference>
<feature type="chain" id="PRO_0000342229" description="LL-diaminopimelate aminotransferase">
    <location>
        <begin position="1"/>
        <end position="388"/>
    </location>
</feature>
<feature type="binding site" evidence="1">
    <location>
        <position position="13"/>
    </location>
    <ligand>
        <name>substrate</name>
    </ligand>
</feature>
<feature type="binding site" evidence="1">
    <location>
        <position position="38"/>
    </location>
    <ligand>
        <name>substrate</name>
    </ligand>
</feature>
<feature type="binding site" evidence="1">
    <location>
        <begin position="101"/>
        <end position="102"/>
    </location>
    <ligand>
        <name>pyridoxal 5'-phosphate</name>
        <dbReference type="ChEBI" id="CHEBI:597326"/>
    </ligand>
</feature>
<feature type="binding site" evidence="1">
    <location>
        <position position="102"/>
    </location>
    <ligand>
        <name>substrate</name>
    </ligand>
</feature>
<feature type="binding site" evidence="1">
    <location>
        <position position="126"/>
    </location>
    <ligand>
        <name>pyridoxal 5'-phosphate</name>
        <dbReference type="ChEBI" id="CHEBI:597326"/>
    </ligand>
</feature>
<feature type="binding site" evidence="1">
    <location>
        <position position="126"/>
    </location>
    <ligand>
        <name>substrate</name>
    </ligand>
</feature>
<feature type="binding site" evidence="1">
    <location>
        <position position="176"/>
    </location>
    <ligand>
        <name>pyridoxal 5'-phosphate</name>
        <dbReference type="ChEBI" id="CHEBI:597326"/>
    </ligand>
</feature>
<feature type="binding site" evidence="1">
    <location>
        <position position="176"/>
    </location>
    <ligand>
        <name>substrate</name>
    </ligand>
</feature>
<feature type="binding site" evidence="1">
    <location>
        <position position="207"/>
    </location>
    <ligand>
        <name>pyridoxal 5'-phosphate</name>
        <dbReference type="ChEBI" id="CHEBI:597326"/>
    </ligand>
</feature>
<feature type="binding site" evidence="1">
    <location>
        <begin position="235"/>
        <end position="237"/>
    </location>
    <ligand>
        <name>pyridoxal 5'-phosphate</name>
        <dbReference type="ChEBI" id="CHEBI:597326"/>
    </ligand>
</feature>
<feature type="binding site" evidence="1">
    <location>
        <position position="246"/>
    </location>
    <ligand>
        <name>pyridoxal 5'-phosphate</name>
        <dbReference type="ChEBI" id="CHEBI:597326"/>
    </ligand>
</feature>
<feature type="binding site" evidence="1">
    <location>
        <position position="364"/>
    </location>
    <ligand>
        <name>substrate</name>
    </ligand>
</feature>
<feature type="modified residue" description="N6-(pyridoxal phosphate)lysine" evidence="1">
    <location>
        <position position="238"/>
    </location>
</feature>
<gene>
    <name evidence="1" type="primary">dapL</name>
    <name type="ordered locus">DehaBAV1_0669</name>
</gene>
<evidence type="ECO:0000255" key="1">
    <source>
        <dbReference type="HAMAP-Rule" id="MF_01642"/>
    </source>
</evidence>
<proteinExistence type="inferred from homology"/>
<comment type="function">
    <text evidence="1">Involved in the synthesis of meso-diaminopimelate (m-DAP or DL-DAP), required for both lysine and peptidoglycan biosynthesis. Catalyzes the direct conversion of tetrahydrodipicolinate to LL-diaminopimelate.</text>
</comment>
<comment type="catalytic activity">
    <reaction evidence="1">
        <text>(2S,6S)-2,6-diaminopimelate + 2-oxoglutarate = (S)-2,3,4,5-tetrahydrodipicolinate + L-glutamate + H2O + H(+)</text>
        <dbReference type="Rhea" id="RHEA:23988"/>
        <dbReference type="ChEBI" id="CHEBI:15377"/>
        <dbReference type="ChEBI" id="CHEBI:15378"/>
        <dbReference type="ChEBI" id="CHEBI:16810"/>
        <dbReference type="ChEBI" id="CHEBI:16845"/>
        <dbReference type="ChEBI" id="CHEBI:29985"/>
        <dbReference type="ChEBI" id="CHEBI:57609"/>
        <dbReference type="EC" id="2.6.1.83"/>
    </reaction>
</comment>
<comment type="cofactor">
    <cofactor evidence="1">
        <name>pyridoxal 5'-phosphate</name>
        <dbReference type="ChEBI" id="CHEBI:597326"/>
    </cofactor>
</comment>
<comment type="pathway">
    <text evidence="1">Amino-acid biosynthesis; L-lysine biosynthesis via DAP pathway; LL-2,6-diaminopimelate from (S)-tetrahydrodipicolinate (aminotransferase route): step 1/1.</text>
</comment>
<comment type="subunit">
    <text evidence="1">Homodimer.</text>
</comment>
<comment type="similarity">
    <text evidence="1">Belongs to the class-I pyridoxal-phosphate-dependent aminotransferase family. LL-diaminopimelate aminotransferase subfamily.</text>
</comment>
<accession>A5FRC5</accession>
<name>DAPAT_DEHMB</name>
<keyword id="KW-0032">Aminotransferase</keyword>
<keyword id="KW-0663">Pyridoxal phosphate</keyword>
<keyword id="KW-0808">Transferase</keyword>
<sequence>MKLSKRIENLPPYLFVQISKKIAEKRAKGEDVISFAIGDPDLPTPKHILAELCKAAEDPSNHRYPETEGLPVLRKAMAEWYQKRFGVKLNPDTEVLPLIGSKEGIGHAAWCFLDPGDIALVPNPAYPVYAISSQLAGAEVFNLPLNKGNNFLPNLEAIPQNILSKAKVLWINYPNNPTGAVAGLSFFQEVANFAAKHNLAVCHDGPYSEIAFDGYKPVSFLEADGAKDVGIEFHSLSKSYNMTGWRIGMAVGNAKMIDALRRFKSNLDSGIPQAIQLMAIAALNGSQEIINQNCAIYQRRRDRLVEALRNIGMEVTAPKASLYIWAPVPESYTSASFATELLDKTGVVVTPGTGYGTAGEGYIRLSLTVPDEQIEKGIAKLAGYKKSS</sequence>
<organism>
    <name type="scientific">Dehalococcoides mccartyi (strain ATCC BAA-2100 / JCM 16839 / KCTC 5957 / BAV1)</name>
    <dbReference type="NCBI Taxonomy" id="216389"/>
    <lineage>
        <taxon>Bacteria</taxon>
        <taxon>Bacillati</taxon>
        <taxon>Chloroflexota</taxon>
        <taxon>Dehalococcoidia</taxon>
        <taxon>Dehalococcoidales</taxon>
        <taxon>Dehalococcoidaceae</taxon>
        <taxon>Dehalococcoides</taxon>
    </lineage>
</organism>